<dbReference type="EC" id="6.3.2.7" evidence="1"/>
<dbReference type="EMBL" id="CP000387">
    <property type="protein sequence ID" value="ABN45121.1"/>
    <property type="molecule type" value="Genomic_DNA"/>
</dbReference>
<dbReference type="RefSeq" id="WP_011837321.1">
    <property type="nucleotide sequence ID" value="NC_009009.1"/>
</dbReference>
<dbReference type="RefSeq" id="YP_001035671.1">
    <property type="nucleotide sequence ID" value="NC_009009.1"/>
</dbReference>
<dbReference type="SMR" id="A3CPL6"/>
<dbReference type="STRING" id="388919.SSA_1739"/>
<dbReference type="KEGG" id="ssa:SSA_1739"/>
<dbReference type="PATRIC" id="fig|388919.9.peg.1647"/>
<dbReference type="eggNOG" id="COG0769">
    <property type="taxonomic scope" value="Bacteria"/>
</dbReference>
<dbReference type="HOGENOM" id="CLU_022291_4_2_9"/>
<dbReference type="OrthoDB" id="9800958at2"/>
<dbReference type="UniPathway" id="UPA00219"/>
<dbReference type="Proteomes" id="UP000002148">
    <property type="component" value="Chromosome"/>
</dbReference>
<dbReference type="GO" id="GO:0005737">
    <property type="term" value="C:cytoplasm"/>
    <property type="evidence" value="ECO:0007669"/>
    <property type="project" value="UniProtKB-SubCell"/>
</dbReference>
<dbReference type="GO" id="GO:0005524">
    <property type="term" value="F:ATP binding"/>
    <property type="evidence" value="ECO:0007669"/>
    <property type="project" value="UniProtKB-UniRule"/>
</dbReference>
<dbReference type="GO" id="GO:0000287">
    <property type="term" value="F:magnesium ion binding"/>
    <property type="evidence" value="ECO:0007669"/>
    <property type="project" value="UniProtKB-UniRule"/>
</dbReference>
<dbReference type="GO" id="GO:0047482">
    <property type="term" value="F:UDP-N-acetylmuramoyl-L-alanyl-D-glutamate-L-lysine ligase activity"/>
    <property type="evidence" value="ECO:0007669"/>
    <property type="project" value="UniProtKB-UniRule"/>
</dbReference>
<dbReference type="GO" id="GO:0051301">
    <property type="term" value="P:cell division"/>
    <property type="evidence" value="ECO:0007669"/>
    <property type="project" value="UniProtKB-KW"/>
</dbReference>
<dbReference type="GO" id="GO:0071555">
    <property type="term" value="P:cell wall organization"/>
    <property type="evidence" value="ECO:0007669"/>
    <property type="project" value="UniProtKB-KW"/>
</dbReference>
<dbReference type="GO" id="GO:0009252">
    <property type="term" value="P:peptidoglycan biosynthetic process"/>
    <property type="evidence" value="ECO:0007669"/>
    <property type="project" value="UniProtKB-UniRule"/>
</dbReference>
<dbReference type="GO" id="GO:0008360">
    <property type="term" value="P:regulation of cell shape"/>
    <property type="evidence" value="ECO:0007669"/>
    <property type="project" value="UniProtKB-KW"/>
</dbReference>
<dbReference type="Gene3D" id="3.90.190.20">
    <property type="entry name" value="Mur ligase, C-terminal domain"/>
    <property type="match status" value="1"/>
</dbReference>
<dbReference type="Gene3D" id="3.40.1190.10">
    <property type="entry name" value="Mur-like, catalytic domain"/>
    <property type="match status" value="1"/>
</dbReference>
<dbReference type="Gene3D" id="3.40.1390.10">
    <property type="entry name" value="MurE/MurF, N-terminal domain"/>
    <property type="match status" value="1"/>
</dbReference>
<dbReference type="HAMAP" id="MF_00208">
    <property type="entry name" value="MurE"/>
    <property type="match status" value="1"/>
</dbReference>
<dbReference type="InterPro" id="IPR036565">
    <property type="entry name" value="Mur-like_cat_sf"/>
</dbReference>
<dbReference type="InterPro" id="IPR004101">
    <property type="entry name" value="Mur_ligase_C"/>
</dbReference>
<dbReference type="InterPro" id="IPR036615">
    <property type="entry name" value="Mur_ligase_C_dom_sf"/>
</dbReference>
<dbReference type="InterPro" id="IPR013221">
    <property type="entry name" value="Mur_ligase_cen"/>
</dbReference>
<dbReference type="InterPro" id="IPR035911">
    <property type="entry name" value="MurE/MurF_N"/>
</dbReference>
<dbReference type="InterPro" id="IPR005761">
    <property type="entry name" value="UDP-N-AcMur-Glu-dNH2Pim_ligase"/>
</dbReference>
<dbReference type="NCBIfam" id="TIGR01085">
    <property type="entry name" value="murE"/>
    <property type="match status" value="1"/>
</dbReference>
<dbReference type="NCBIfam" id="NF010628">
    <property type="entry name" value="PRK14022.1"/>
    <property type="match status" value="1"/>
</dbReference>
<dbReference type="PANTHER" id="PTHR23135">
    <property type="entry name" value="MUR LIGASE FAMILY MEMBER"/>
    <property type="match status" value="1"/>
</dbReference>
<dbReference type="PANTHER" id="PTHR23135:SF4">
    <property type="entry name" value="UDP-N-ACETYLMURAMOYL-L-ALANYL-D-GLUTAMATE--2,6-DIAMINOPIMELATE LIGASE MURE HOMOLOG, CHLOROPLASTIC"/>
    <property type="match status" value="1"/>
</dbReference>
<dbReference type="Pfam" id="PF02875">
    <property type="entry name" value="Mur_ligase_C"/>
    <property type="match status" value="1"/>
</dbReference>
<dbReference type="Pfam" id="PF08245">
    <property type="entry name" value="Mur_ligase_M"/>
    <property type="match status" value="1"/>
</dbReference>
<dbReference type="SUPFAM" id="SSF53623">
    <property type="entry name" value="MurD-like peptide ligases, catalytic domain"/>
    <property type="match status" value="1"/>
</dbReference>
<dbReference type="SUPFAM" id="SSF53244">
    <property type="entry name" value="MurD-like peptide ligases, peptide-binding domain"/>
    <property type="match status" value="1"/>
</dbReference>
<dbReference type="SUPFAM" id="SSF63418">
    <property type="entry name" value="MurE/MurF N-terminal domain"/>
    <property type="match status" value="1"/>
</dbReference>
<organism>
    <name type="scientific">Streptococcus sanguinis (strain SK36)</name>
    <dbReference type="NCBI Taxonomy" id="388919"/>
    <lineage>
        <taxon>Bacteria</taxon>
        <taxon>Bacillati</taxon>
        <taxon>Bacillota</taxon>
        <taxon>Bacilli</taxon>
        <taxon>Lactobacillales</taxon>
        <taxon>Streptococcaceae</taxon>
        <taxon>Streptococcus</taxon>
    </lineage>
</organism>
<keyword id="KW-0067">ATP-binding</keyword>
<keyword id="KW-0131">Cell cycle</keyword>
<keyword id="KW-0132">Cell division</keyword>
<keyword id="KW-0133">Cell shape</keyword>
<keyword id="KW-0961">Cell wall biogenesis/degradation</keyword>
<keyword id="KW-0963">Cytoplasm</keyword>
<keyword id="KW-0436">Ligase</keyword>
<keyword id="KW-0547">Nucleotide-binding</keyword>
<keyword id="KW-0573">Peptidoglycan synthesis</keyword>
<keyword id="KW-1185">Reference proteome</keyword>
<reference key="1">
    <citation type="journal article" date="2007" name="J. Bacteriol.">
        <title>Genome of the opportunistic pathogen Streptococcus sanguinis.</title>
        <authorList>
            <person name="Xu P."/>
            <person name="Alves J.M."/>
            <person name="Kitten T."/>
            <person name="Brown A."/>
            <person name="Chen Z."/>
            <person name="Ozaki L.S."/>
            <person name="Manque P."/>
            <person name="Ge X."/>
            <person name="Serrano M.G."/>
            <person name="Puiu D."/>
            <person name="Hendricks S."/>
            <person name="Wang Y."/>
            <person name="Chaplin M.D."/>
            <person name="Akan D."/>
            <person name="Paik S."/>
            <person name="Peterson D.L."/>
            <person name="Macrina F.L."/>
            <person name="Buck G.A."/>
        </authorList>
    </citation>
    <scope>NUCLEOTIDE SEQUENCE [LARGE SCALE GENOMIC DNA]</scope>
    <source>
        <strain>SK36</strain>
    </source>
</reference>
<name>MURE_STRSV</name>
<feature type="chain" id="PRO_1000012393" description="UDP-N-acetylmuramoyl-L-alanyl-D-glutamate--L-lysine ligase">
    <location>
        <begin position="1"/>
        <end position="481"/>
    </location>
</feature>
<feature type="short sequence motif" description="L-lysine recognition motif">
    <location>
        <begin position="404"/>
        <end position="407"/>
    </location>
</feature>
<feature type="binding site" evidence="1">
    <location>
        <position position="42"/>
    </location>
    <ligand>
        <name>UDP-N-acetyl-alpha-D-muramoyl-L-alanyl-D-glutamate</name>
        <dbReference type="ChEBI" id="CHEBI:83900"/>
    </ligand>
</feature>
<feature type="binding site" evidence="1">
    <location>
        <begin position="118"/>
        <end position="124"/>
    </location>
    <ligand>
        <name>ATP</name>
        <dbReference type="ChEBI" id="CHEBI:30616"/>
    </ligand>
</feature>
<feature type="binding site" evidence="1">
    <location>
        <begin position="160"/>
        <end position="161"/>
    </location>
    <ligand>
        <name>UDP-N-acetyl-alpha-D-muramoyl-L-alanyl-D-glutamate</name>
        <dbReference type="ChEBI" id="CHEBI:83900"/>
    </ligand>
</feature>
<feature type="binding site" evidence="1">
    <location>
        <position position="187"/>
    </location>
    <ligand>
        <name>UDP-N-acetyl-alpha-D-muramoyl-L-alanyl-D-glutamate</name>
        <dbReference type="ChEBI" id="CHEBI:83900"/>
    </ligand>
</feature>
<feature type="binding site" evidence="1">
    <location>
        <position position="195"/>
    </location>
    <ligand>
        <name>UDP-N-acetyl-alpha-D-muramoyl-L-alanyl-D-glutamate</name>
        <dbReference type="ChEBI" id="CHEBI:83900"/>
    </ligand>
</feature>
<feature type="modified residue" description="N6-carboxylysine" evidence="1">
    <location>
        <position position="229"/>
    </location>
</feature>
<accession>A3CPL6</accession>
<evidence type="ECO:0000255" key="1">
    <source>
        <dbReference type="HAMAP-Rule" id="MF_00208"/>
    </source>
</evidence>
<protein>
    <recommendedName>
        <fullName evidence="1">UDP-N-acetylmuramoyl-L-alanyl-D-glutamate--L-lysine ligase</fullName>
        <ecNumber evidence="1">6.3.2.7</ecNumber>
    </recommendedName>
    <alternativeName>
        <fullName evidence="1">L-lysine-adding enzyme</fullName>
    </alternativeName>
    <alternativeName>
        <fullName evidence="1">UDP-MurNAc-L-Ala-D-Glu:L-Lys ligase</fullName>
    </alternativeName>
    <alternativeName>
        <fullName evidence="1">UDP-MurNAc-tripeptide synthetase</fullName>
    </alternativeName>
    <alternativeName>
        <fullName evidence="1">UDP-N-acetylmuramyl-tripeptide synthetase</fullName>
    </alternativeName>
</protein>
<sequence length="481" mass="53511">MIKIETVLVILKEDHNFRDIVKGEEYFFSYSGLTFDSISYDSREADASTLFFVKGEAFKKEFLEKAVSVGLRFYISETDFQVGIPVLLVNDVKQAMSLLAMEFYGHPEKKLKLLAFTGTKGKTTTAYFTYQILSQSHRPALLSTMNTTLDGETFFKSTLTTPESLDLIKMMAQALANDRTHLIMEVSSQAYLKKRVYGLTFDVGVFLNISPDHIGPIEHPTFEDYFYNKRLLMDNSRAVIVNSGMDHFQIVKEQVASLEHDFYGADSSNTIKDSQAFSFEATGKLAGNYDIQLIGRFNQENAVAAGLACLRLGASLEDIKKGIAATRVPGRMEVLTQKNGAKVFVDYAHNGVSLRNLLSVVEEHQKGKIILLLGATGNKGESRRKDFGLLLNQHPELTVILTADDPNYEDPLAIAEEIASYISYPVEKIADREEAIKKALSLTEREGDAVILAGKGADAYQIVEGEKVAYPGDYALAEKYL</sequence>
<gene>
    <name evidence="1" type="primary">murE</name>
    <name type="ordered locus">SSA_1739</name>
</gene>
<proteinExistence type="inferred from homology"/>
<comment type="function">
    <text evidence="1">Catalyzes the addition of L-lysine to the nucleotide precursor UDP-N-acetylmuramoyl-L-alanyl-D-glutamate (UMAG) in the biosynthesis of bacterial cell-wall peptidoglycan.</text>
</comment>
<comment type="catalytic activity">
    <reaction evidence="1">
        <text>UDP-N-acetyl-alpha-D-muramoyl-L-alanyl-D-glutamate + L-lysine + ATP = UDP-N-acetyl-alpha-D-muramoyl-L-alanyl-gamma-D-glutamyl-L-lysine + ADP + phosphate + H(+)</text>
        <dbReference type="Rhea" id="RHEA:17969"/>
        <dbReference type="ChEBI" id="CHEBI:15378"/>
        <dbReference type="ChEBI" id="CHEBI:30616"/>
        <dbReference type="ChEBI" id="CHEBI:32551"/>
        <dbReference type="ChEBI" id="CHEBI:43474"/>
        <dbReference type="ChEBI" id="CHEBI:83900"/>
        <dbReference type="ChEBI" id="CHEBI:83903"/>
        <dbReference type="ChEBI" id="CHEBI:456216"/>
        <dbReference type="EC" id="6.3.2.7"/>
    </reaction>
</comment>
<comment type="pathway">
    <text evidence="1">Cell wall biogenesis; peptidoglycan biosynthesis.</text>
</comment>
<comment type="subcellular location">
    <subcellularLocation>
        <location evidence="1">Cytoplasm</location>
    </subcellularLocation>
</comment>
<comment type="PTM">
    <text evidence="1">Carboxylation is probably crucial for Mg(2+) binding and, consequently, for the gamma-phosphate positioning of ATP.</text>
</comment>
<comment type="similarity">
    <text evidence="1">Belongs to the MurCDEF family. MurE subfamily.</text>
</comment>